<dbReference type="EMBL" id="AF243438">
    <property type="protein sequence ID" value="AAG14274.1"/>
    <property type="molecule type" value="Genomic_DNA"/>
</dbReference>
<dbReference type="EMBL" id="AF243438">
    <property type="protein sequence ID" value="AAG14285.1"/>
    <property type="molecule type" value="Genomic_DNA"/>
</dbReference>
<dbReference type="Proteomes" id="UP000008072">
    <property type="component" value="Segment"/>
</dbReference>
<gene>
    <name type="primary">MDV082</name>
    <name type="synonym">MDV102</name>
</gene>
<keyword id="KW-1185">Reference proteome</keyword>
<organism>
    <name type="scientific">Gallid herpesvirus 2 (strain Chicken/Md5/ATCC VR-987)</name>
    <name type="common">GaHV-2</name>
    <name type="synonym">Marek's disease herpesvirus type 1</name>
    <dbReference type="NCBI Taxonomy" id="10389"/>
    <lineage>
        <taxon>Viruses</taxon>
        <taxon>Duplodnaviria</taxon>
        <taxon>Heunggongvirae</taxon>
        <taxon>Peploviricota</taxon>
        <taxon>Herviviricetes</taxon>
        <taxon>Herpesvirales</taxon>
        <taxon>Orthoherpesviridae</taxon>
        <taxon>Alphaherpesvirinae</taxon>
        <taxon>Mardivirus</taxon>
        <taxon>Mardivirus gallidalpha2</taxon>
        <taxon>Gallid alphaherpesvirus 2</taxon>
    </lineage>
</organism>
<organismHost>
    <name type="scientific">Gallus gallus</name>
    <name type="common">Chicken</name>
    <dbReference type="NCBI Taxonomy" id="9031"/>
</organismHost>
<evidence type="ECO:0000256" key="1">
    <source>
        <dbReference type="SAM" id="MobiDB-lite"/>
    </source>
</evidence>
<reference key="1">
    <citation type="journal article" date="2000" name="J. Virol.">
        <title>The genome of a very virulent Marek's disease virus.</title>
        <authorList>
            <person name="Tulman E.R."/>
            <person name="Afonso C.L."/>
            <person name="Lu Z."/>
            <person name="Zsak L."/>
            <person name="Rock D.L."/>
            <person name="Kutish G.F."/>
        </authorList>
    </citation>
    <scope>NUCLEOTIDE SEQUENCE [LARGE SCALE GENOMIC DNA]</scope>
</reference>
<feature type="chain" id="PRO_0000406535" description="Uncharacterized gene 82 protein">
    <location>
        <begin position="1"/>
        <end position="108"/>
    </location>
</feature>
<feature type="region of interest" description="Disordered" evidence="1">
    <location>
        <begin position="1"/>
        <end position="63"/>
    </location>
</feature>
<feature type="region of interest" description="Disordered" evidence="1">
    <location>
        <begin position="83"/>
        <end position="108"/>
    </location>
</feature>
<feature type="compositionally biased region" description="Polar residues" evidence="1">
    <location>
        <begin position="1"/>
        <end position="10"/>
    </location>
</feature>
<feature type="compositionally biased region" description="Basic and acidic residues" evidence="1">
    <location>
        <begin position="33"/>
        <end position="62"/>
    </location>
</feature>
<name>VG82_GAHVM</name>
<accession>Q9DH37</accession>
<protein>
    <recommendedName>
        <fullName>Uncharacterized gene 82 protein</fullName>
    </recommendedName>
</protein>
<proteinExistence type="predicted"/>
<sequence length="108" mass="12031">MSGISLTPVKQENEPCSFLRHDSGSTQAVNDTYVDRARPSADAKEHCAASDPEEWHSGDRPPRLCRKPSRFYRRIVIPETAPVLSPRYDLSDEPHAPGTTMISGPRTQ</sequence>